<proteinExistence type="evidence at protein level"/>
<comment type="function">
    <text evidence="4">Involved in B-cell receptor (BCR)-induced Ca(2+) mobilization from intracellular stores. Promotes Lyn-mediated phosphorylation of IP3 receptors 1 and 2.</text>
</comment>
<comment type="subunit">
    <text evidence="4">Interacts with LYN, ITPR1 and ITPR2.</text>
</comment>
<comment type="interaction">
    <interactant intactId="EBI-2837677">
        <id>Q8NDB2</id>
    </interactant>
    <interactant intactId="EBI-2105445">
        <id>P51451</id>
        <label>BLK</label>
    </interactant>
    <organismsDiffer>false</organismsDiffer>
    <experiments>6</experiments>
</comment>
<comment type="interaction">
    <interactant intactId="EBI-2837677">
        <id>Q8NDB2</id>
    </interactant>
    <interactant intactId="EBI-79452">
        <id>P07948</id>
        <label>LYN</label>
    </interactant>
    <organismsDiffer>false</organismsDiffer>
    <experiments>3</experiments>
</comment>
<comment type="alternative products">
    <event type="alternative splicing"/>
    <isoform>
        <id>Q8NDB2-1</id>
        <name>1</name>
        <sequence type="displayed"/>
    </isoform>
    <isoform>
        <id>Q8NDB2-2</id>
        <name>2</name>
        <sequence type="described" ref="VSP_020804 VSP_020805"/>
    </isoform>
    <isoform>
        <id>Q8NDB2-3</id>
        <name>3</name>
        <sequence type="described" ref="VSP_020803"/>
    </isoform>
    <isoform>
        <id>Q8NDB2-4</id>
        <name>4</name>
        <name>delta2</name>
        <sequence type="described" ref="VSP_034214"/>
    </isoform>
</comment>
<comment type="tissue specificity">
    <text evidence="4 8">Expressed in B-cell but not T-cell or myeloid cell lines. Highest expression in CD19(+) B-cells, with very low expression in other cell populations.</text>
</comment>
<comment type="PTM">
    <text evidence="4">Phosphorylated on tyrosines upon BCR activation.</text>
</comment>
<comment type="disease" evidence="8">
    <disease id="DI-02648">
        <name>Systemic lupus erythematosus</name>
        <acronym>SLE</acronym>
        <description>A chronic, relapsing, inflammatory, and often febrile multisystemic disorder of connective tissue, characterized principally by involvement of the skin, joints, kidneys and serosal membranes. It is of unknown etiology, but is thought to represent a failure of the regulatory mechanisms of the autoimmune system. The disease is marked by a wide range of system dysfunctions, an elevated erythrocyte sedimentation rate, and the formation of LE cells in the blood or bone marrow.</description>
        <dbReference type="MIM" id="152700"/>
    </disease>
    <text>Disease susceptibility may be associated with variants affecting the gene represented in this entry.</text>
</comment>
<comment type="sequence caution" evidence="12">
    <conflict type="frameshift">
        <sequence resource="EMBL-CDS" id="BAA91337"/>
    </conflict>
</comment>
<feature type="chain" id="PRO_0000251927" description="B-cell scaffold protein with ankyrin repeats">
    <location>
        <begin position="1"/>
        <end position="785"/>
    </location>
</feature>
<feature type="domain" description="TIR" evidence="1">
    <location>
        <begin position="25"/>
        <end position="153"/>
    </location>
</feature>
<feature type="domain" description="DBB" evidence="2">
    <location>
        <begin position="200"/>
        <end position="327"/>
    </location>
</feature>
<feature type="repeat" description="ANK 1">
    <location>
        <begin position="342"/>
        <end position="371"/>
    </location>
</feature>
<feature type="repeat" description="ANK 2">
    <location>
        <begin position="378"/>
        <end position="408"/>
    </location>
</feature>
<feature type="region of interest" description="Interaction with ITPR2" evidence="4">
    <location>
        <begin position="1"/>
        <end position="154"/>
    </location>
</feature>
<feature type="region of interest" description="Disordered" evidence="3">
    <location>
        <begin position="433"/>
        <end position="480"/>
    </location>
</feature>
<feature type="region of interest" description="Disordered" evidence="3">
    <location>
        <begin position="493"/>
        <end position="514"/>
    </location>
</feature>
<feature type="region of interest" description="Disordered" evidence="3">
    <location>
        <begin position="538"/>
        <end position="578"/>
    </location>
</feature>
<feature type="region of interest" description="Disordered" evidence="3">
    <location>
        <begin position="606"/>
        <end position="625"/>
    </location>
</feature>
<feature type="compositionally biased region" description="Basic and acidic residues" evidence="3">
    <location>
        <begin position="553"/>
        <end position="568"/>
    </location>
</feature>
<feature type="compositionally biased region" description="Acidic residues" evidence="3">
    <location>
        <begin position="569"/>
        <end position="578"/>
    </location>
</feature>
<feature type="compositionally biased region" description="Pro residues" evidence="3">
    <location>
        <begin position="611"/>
        <end position="621"/>
    </location>
</feature>
<feature type="splice variant" id="VSP_020803" description="In isoform 3." evidence="9 10">
    <location>
        <begin position="1"/>
        <end position="30"/>
    </location>
</feature>
<feature type="splice variant" id="VSP_020804" description="In isoform 2." evidence="10">
    <location>
        <begin position="1"/>
        <end position="14"/>
    </location>
</feature>
<feature type="splice variant" id="VSP_020805" description="In isoform 2." evidence="10">
    <original>PAPCGPAPP</original>
    <variation>MVNCHLKI</variation>
    <location>
        <begin position="15"/>
        <end position="23"/>
    </location>
</feature>
<feature type="splice variant" id="VSP_034214" description="In isoform 4." evidence="11">
    <location>
        <begin position="24"/>
        <end position="156"/>
    </location>
</feature>
<feature type="sequence variant" id="VAR_027729" description="May influence susceptibility to SLE; dbSNP:rs10516487." evidence="8">
    <original>R</original>
    <variation>H</variation>
    <location>
        <position position="61"/>
    </location>
</feature>
<feature type="sequence variant" id="VAR_027730" description="May influence susceptibility to SLE; dbSNP:rs3733197." evidence="5 8">
    <original>A</original>
    <variation>T</variation>
    <location>
        <position position="383"/>
    </location>
</feature>
<feature type="sequence variant" id="VAR_027731" description="In dbSNP:rs3113676." evidence="4 5 6 7 8">
    <original>C</original>
    <variation>R</variation>
    <location>
        <position position="650"/>
    </location>
</feature>
<feature type="sequence conflict" description="In Ref. 4; BAA91337." evidence="12" ref="4">
    <original>P</original>
    <variation>L</variation>
    <location>
        <position position="143"/>
    </location>
</feature>
<feature type="sequence conflict" description="In Ref. 4; BAC03685." evidence="12" ref="4">
    <original>N</original>
    <variation>D</variation>
    <location>
        <position position="209"/>
    </location>
</feature>
<feature type="sequence conflict" description="In Ref. 4; BAF84822." evidence="12" ref="4">
    <original>S</original>
    <variation>R</variation>
    <location>
        <position position="303"/>
    </location>
</feature>
<feature type="sequence conflict" description="In Ref. 1; BAB79255." evidence="12" ref="1">
    <original>H</original>
    <variation>R</variation>
    <location>
        <position position="436"/>
    </location>
</feature>
<feature type="sequence conflict" description="In Ref. 4; BAA91337." evidence="12" ref="4">
    <original>E</original>
    <variation>D</variation>
    <location>
        <position position="557"/>
    </location>
</feature>
<evidence type="ECO:0000255" key="1">
    <source>
        <dbReference type="PROSITE-ProRule" id="PRU00204"/>
    </source>
</evidence>
<evidence type="ECO:0000255" key="2">
    <source>
        <dbReference type="PROSITE-ProRule" id="PRU00707"/>
    </source>
</evidence>
<evidence type="ECO:0000256" key="3">
    <source>
        <dbReference type="SAM" id="MobiDB-lite"/>
    </source>
</evidence>
<evidence type="ECO:0000269" key="4">
    <source>
    </source>
</evidence>
<evidence type="ECO:0000269" key="5">
    <source>
    </source>
</evidence>
<evidence type="ECO:0000269" key="6">
    <source>
    </source>
</evidence>
<evidence type="ECO:0000269" key="7">
    <source>
    </source>
</evidence>
<evidence type="ECO:0000269" key="8">
    <source>
    </source>
</evidence>
<evidence type="ECO:0000303" key="9">
    <source>
    </source>
</evidence>
<evidence type="ECO:0000303" key="10">
    <source>
    </source>
</evidence>
<evidence type="ECO:0000303" key="11">
    <source>
    </source>
</evidence>
<evidence type="ECO:0000305" key="12"/>
<dbReference type="EMBL" id="AB063170">
    <property type="protein sequence ID" value="BAB79255.1"/>
    <property type="molecule type" value="mRNA"/>
</dbReference>
<dbReference type="EMBL" id="EU051376">
    <property type="protein sequence ID" value="ABW74340.1"/>
    <property type="molecule type" value="mRNA"/>
</dbReference>
<dbReference type="EMBL" id="AK000713">
    <property type="protein sequence ID" value="BAA91337.1"/>
    <property type="status" value="ALT_FRAME"/>
    <property type="molecule type" value="mRNA"/>
</dbReference>
<dbReference type="EMBL" id="AK091523">
    <property type="protein sequence ID" value="BAC03685.1"/>
    <property type="molecule type" value="mRNA"/>
</dbReference>
<dbReference type="EMBL" id="AK292133">
    <property type="protein sequence ID" value="BAF84822.1"/>
    <property type="molecule type" value="mRNA"/>
</dbReference>
<dbReference type="EMBL" id="AL834291">
    <property type="protein sequence ID" value="CAD38965.2"/>
    <property type="molecule type" value="mRNA"/>
</dbReference>
<dbReference type="EMBL" id="AC093694">
    <property type="status" value="NOT_ANNOTATED_CDS"/>
    <property type="molecule type" value="Genomic_DNA"/>
</dbReference>
<dbReference type="EMBL" id="AC095062">
    <property type="status" value="NOT_ANNOTATED_CDS"/>
    <property type="molecule type" value="Genomic_DNA"/>
</dbReference>
<dbReference type="EMBL" id="AC109928">
    <property type="status" value="NOT_ANNOTATED_CDS"/>
    <property type="molecule type" value="Genomic_DNA"/>
</dbReference>
<dbReference type="EMBL" id="AP002075">
    <property type="status" value="NOT_ANNOTATED_CDS"/>
    <property type="molecule type" value="Genomic_DNA"/>
</dbReference>
<dbReference type="EMBL" id="BC032241">
    <property type="protein sequence ID" value="AAH32241.2"/>
    <property type="molecule type" value="mRNA"/>
</dbReference>
<dbReference type="CCDS" id="CCDS34038.1">
    <molecule id="Q8NDB2-1"/>
</dbReference>
<dbReference type="CCDS" id="CCDS47115.1">
    <molecule id="Q8NDB2-4"/>
</dbReference>
<dbReference type="CCDS" id="CCDS47116.1">
    <molecule id="Q8NDB2-3"/>
</dbReference>
<dbReference type="RefSeq" id="NP_001077376.3">
    <molecule id="Q8NDB2-3"/>
    <property type="nucleotide sequence ID" value="NM_001083907.3"/>
</dbReference>
<dbReference type="RefSeq" id="NP_001120979.3">
    <molecule id="Q8NDB2-4"/>
    <property type="nucleotide sequence ID" value="NM_001127507.3"/>
</dbReference>
<dbReference type="RefSeq" id="NP_060405.4">
    <molecule id="Q8NDB2-1"/>
    <property type="nucleotide sequence ID" value="NM_017935.4"/>
</dbReference>
<dbReference type="RefSeq" id="XP_016863826.1">
    <property type="nucleotide sequence ID" value="XM_017008337.1"/>
</dbReference>
<dbReference type="SMR" id="Q8NDB2"/>
<dbReference type="BioGRID" id="120354">
    <property type="interactions" value="9"/>
</dbReference>
<dbReference type="FunCoup" id="Q8NDB2">
    <property type="interactions" value="457"/>
</dbReference>
<dbReference type="IntAct" id="Q8NDB2">
    <property type="interactions" value="11"/>
</dbReference>
<dbReference type="MINT" id="Q8NDB2"/>
<dbReference type="STRING" id="9606.ENSP00000320509"/>
<dbReference type="GlyGen" id="Q8NDB2">
    <property type="glycosylation" value="2 sites"/>
</dbReference>
<dbReference type="iPTMnet" id="Q8NDB2"/>
<dbReference type="PhosphoSitePlus" id="Q8NDB2"/>
<dbReference type="BioMuta" id="BANK1"/>
<dbReference type="DMDM" id="308153627"/>
<dbReference type="MassIVE" id="Q8NDB2"/>
<dbReference type="PaxDb" id="9606-ENSP00000320509"/>
<dbReference type="PeptideAtlas" id="Q8NDB2"/>
<dbReference type="ProteomicsDB" id="73007">
    <molecule id="Q8NDB2-1"/>
</dbReference>
<dbReference type="ProteomicsDB" id="73008">
    <molecule id="Q8NDB2-2"/>
</dbReference>
<dbReference type="ProteomicsDB" id="73009">
    <molecule id="Q8NDB2-3"/>
</dbReference>
<dbReference type="ProteomicsDB" id="73010">
    <molecule id="Q8NDB2-4"/>
</dbReference>
<dbReference type="Antibodypedia" id="51626">
    <property type="antibodies" value="114 antibodies from 26 providers"/>
</dbReference>
<dbReference type="DNASU" id="55024"/>
<dbReference type="Ensembl" id="ENST00000322953.9">
    <molecule id="Q8NDB2-1"/>
    <property type="protein sequence ID" value="ENSP00000320509.4"/>
    <property type="gene ID" value="ENSG00000153064.12"/>
</dbReference>
<dbReference type="Ensembl" id="ENST00000428908.5">
    <molecule id="Q8NDB2-4"/>
    <property type="protein sequence ID" value="ENSP00000412748.1"/>
    <property type="gene ID" value="ENSG00000153064.12"/>
</dbReference>
<dbReference type="Ensembl" id="ENST00000444316.2">
    <molecule id="Q8NDB2-3"/>
    <property type="protein sequence ID" value="ENSP00000388817.2"/>
    <property type="gene ID" value="ENSG00000153064.12"/>
</dbReference>
<dbReference type="Ensembl" id="ENST00000504592.5">
    <molecule id="Q8NDB2-2"/>
    <property type="protein sequence ID" value="ENSP00000421443.1"/>
    <property type="gene ID" value="ENSG00000153064.12"/>
</dbReference>
<dbReference type="Ensembl" id="ENST00000508653.5">
    <molecule id="Q8NDB2-4"/>
    <property type="protein sequence ID" value="ENSP00000422314.1"/>
    <property type="gene ID" value="ENSG00000153064.12"/>
</dbReference>
<dbReference type="GeneID" id="55024"/>
<dbReference type="KEGG" id="hsa:55024"/>
<dbReference type="MANE-Select" id="ENST00000322953.9">
    <property type="protein sequence ID" value="ENSP00000320509.4"/>
    <property type="RefSeq nucleotide sequence ID" value="NM_017935.5"/>
    <property type="RefSeq protein sequence ID" value="NP_060405.5"/>
</dbReference>
<dbReference type="UCSC" id="uc003hvx.4">
    <molecule id="Q8NDB2-1"/>
    <property type="organism name" value="human"/>
</dbReference>
<dbReference type="AGR" id="HGNC:18233"/>
<dbReference type="CTD" id="55024"/>
<dbReference type="DisGeNET" id="55024"/>
<dbReference type="GeneCards" id="BANK1"/>
<dbReference type="HGNC" id="HGNC:18233">
    <property type="gene designation" value="BANK1"/>
</dbReference>
<dbReference type="HPA" id="ENSG00000153064">
    <property type="expression patterns" value="Group enriched (intestine, lymphoid tissue)"/>
</dbReference>
<dbReference type="MalaCards" id="BANK1"/>
<dbReference type="MIM" id="152700">
    <property type="type" value="phenotype"/>
</dbReference>
<dbReference type="MIM" id="610292">
    <property type="type" value="gene"/>
</dbReference>
<dbReference type="neXtProt" id="NX_Q8NDB2"/>
<dbReference type="OpenTargets" id="ENSG00000153064"/>
<dbReference type="Orphanet" id="536">
    <property type="disease" value="Systemic lupus erythematosus"/>
</dbReference>
<dbReference type="PharmGKB" id="PA128394677"/>
<dbReference type="VEuPathDB" id="HostDB:ENSG00000153064"/>
<dbReference type="eggNOG" id="ENOG502REIM">
    <property type="taxonomic scope" value="Eukaryota"/>
</dbReference>
<dbReference type="GeneTree" id="ENSGT00390000008787"/>
<dbReference type="HOGENOM" id="CLU_012993_1_0_1"/>
<dbReference type="InParanoid" id="Q8NDB2"/>
<dbReference type="OMA" id="MCQALQA"/>
<dbReference type="OrthoDB" id="8192811at2759"/>
<dbReference type="PAN-GO" id="Q8NDB2">
    <property type="GO annotations" value="5 GO annotations based on evolutionary models"/>
</dbReference>
<dbReference type="PhylomeDB" id="Q8NDB2"/>
<dbReference type="TreeFam" id="TF328570"/>
<dbReference type="PathwayCommons" id="Q8NDB2"/>
<dbReference type="SignaLink" id="Q8NDB2"/>
<dbReference type="BioGRID-ORCS" id="55024">
    <property type="hits" value="22 hits in 1144 CRISPR screens"/>
</dbReference>
<dbReference type="ChiTaRS" id="BANK1">
    <property type="organism name" value="human"/>
</dbReference>
<dbReference type="GenomeRNAi" id="55024"/>
<dbReference type="Pharos" id="Q8NDB2">
    <property type="development level" value="Tbio"/>
</dbReference>
<dbReference type="PRO" id="PR:Q8NDB2"/>
<dbReference type="Proteomes" id="UP000005640">
    <property type="component" value="Chromosome 4"/>
</dbReference>
<dbReference type="RNAct" id="Q8NDB2">
    <property type="molecule type" value="protein"/>
</dbReference>
<dbReference type="Bgee" id="ENSG00000153064">
    <property type="expression patterns" value="Expressed in lymph node and 148 other cell types or tissues"/>
</dbReference>
<dbReference type="GO" id="GO:0048471">
    <property type="term" value="C:perinuclear region of cytoplasm"/>
    <property type="evidence" value="ECO:0000314"/>
    <property type="project" value="ARUK-UCL"/>
</dbReference>
<dbReference type="GO" id="GO:0043274">
    <property type="term" value="F:phospholipase binding"/>
    <property type="evidence" value="ECO:0000353"/>
    <property type="project" value="ARUK-UCL"/>
</dbReference>
<dbReference type="GO" id="GO:0002020">
    <property type="term" value="F:protease binding"/>
    <property type="evidence" value="ECO:0000353"/>
    <property type="project" value="ARUK-UCL"/>
</dbReference>
<dbReference type="GO" id="GO:1990782">
    <property type="term" value="F:protein tyrosine kinase binding"/>
    <property type="evidence" value="ECO:0000353"/>
    <property type="project" value="UniProtKB"/>
</dbReference>
<dbReference type="GO" id="GO:0035591">
    <property type="term" value="F:signaling adaptor activity"/>
    <property type="evidence" value="ECO:0000314"/>
    <property type="project" value="ARUK-UCL"/>
</dbReference>
<dbReference type="GO" id="GO:0005102">
    <property type="term" value="F:signaling receptor binding"/>
    <property type="evidence" value="ECO:0000353"/>
    <property type="project" value="UniProtKB"/>
</dbReference>
<dbReference type="GO" id="GO:0042113">
    <property type="term" value="P:B cell activation"/>
    <property type="evidence" value="ECO:0000314"/>
    <property type="project" value="UniProtKB"/>
</dbReference>
<dbReference type="GO" id="GO:0050853">
    <property type="term" value="P:B cell receptor signaling pathway"/>
    <property type="evidence" value="ECO:0000304"/>
    <property type="project" value="ARUK-UCL"/>
</dbReference>
<dbReference type="GO" id="GO:0000165">
    <property type="term" value="P:MAPK cascade"/>
    <property type="evidence" value="ECO:0007669"/>
    <property type="project" value="Ensembl"/>
</dbReference>
<dbReference type="GO" id="GO:0050869">
    <property type="term" value="P:negative regulation of B cell activation"/>
    <property type="evidence" value="ECO:0000318"/>
    <property type="project" value="GO_Central"/>
</dbReference>
<dbReference type="GO" id="GO:0032715">
    <property type="term" value="P:negative regulation of interleukin-6 production"/>
    <property type="evidence" value="ECO:0007669"/>
    <property type="project" value="Ensembl"/>
</dbReference>
<dbReference type="GO" id="GO:0051898">
    <property type="term" value="P:negative regulation of phosphatidylinositol 3-kinase/protein kinase B signal transduction"/>
    <property type="evidence" value="ECO:0000318"/>
    <property type="project" value="GO_Central"/>
</dbReference>
<dbReference type="GO" id="GO:0045947">
    <property type="term" value="P:negative regulation of translational initiation"/>
    <property type="evidence" value="ECO:0007669"/>
    <property type="project" value="Ensembl"/>
</dbReference>
<dbReference type="GO" id="GO:0043491">
    <property type="term" value="P:phosphatidylinositol 3-kinase/protein kinase B signal transduction"/>
    <property type="evidence" value="ECO:0007669"/>
    <property type="project" value="Ensembl"/>
</dbReference>
<dbReference type="GO" id="GO:0043410">
    <property type="term" value="P:positive regulation of MAPK cascade"/>
    <property type="evidence" value="ECO:0007669"/>
    <property type="project" value="Ensembl"/>
</dbReference>
<dbReference type="GO" id="GO:0050731">
    <property type="term" value="P:positive regulation of peptidyl-tyrosine phosphorylation"/>
    <property type="evidence" value="ECO:0000315"/>
    <property type="project" value="UniProtKB"/>
</dbReference>
<dbReference type="GO" id="GO:0009617">
    <property type="term" value="P:response to bacterium"/>
    <property type="evidence" value="ECO:0007669"/>
    <property type="project" value="Ensembl"/>
</dbReference>
<dbReference type="FunFam" id="3.40.50.10140:FF:000017">
    <property type="entry name" value="B cell scaffold protein with ankyrin repeats 1"/>
    <property type="match status" value="1"/>
</dbReference>
<dbReference type="Gene3D" id="3.40.50.10140">
    <property type="entry name" value="Toll/interleukin-1 receptor homology (TIR) domain"/>
    <property type="match status" value="1"/>
</dbReference>
<dbReference type="InterPro" id="IPR036770">
    <property type="entry name" value="Ankyrin_rpt-contain_sf"/>
</dbReference>
<dbReference type="InterPro" id="IPR052446">
    <property type="entry name" value="B-cell_PI3K-Signaling_Adptrs"/>
</dbReference>
<dbReference type="InterPro" id="IPR017893">
    <property type="entry name" value="DBB_domain"/>
</dbReference>
<dbReference type="InterPro" id="IPR041340">
    <property type="entry name" value="PIK3AP1_TIR"/>
</dbReference>
<dbReference type="InterPro" id="IPR000157">
    <property type="entry name" value="TIR_dom"/>
</dbReference>
<dbReference type="InterPro" id="IPR035897">
    <property type="entry name" value="Toll_tir_struct_dom_sf"/>
</dbReference>
<dbReference type="PANTHER" id="PTHR16267:SF13">
    <property type="entry name" value="B-CELL SCAFFOLD PROTEIN WITH ANKYRIN REPEATS"/>
    <property type="match status" value="1"/>
</dbReference>
<dbReference type="PANTHER" id="PTHR16267">
    <property type="entry name" value="BANK1/PIK3AP1 FAMILY MEMBER"/>
    <property type="match status" value="1"/>
</dbReference>
<dbReference type="Pfam" id="PF14545">
    <property type="entry name" value="DBB"/>
    <property type="match status" value="1"/>
</dbReference>
<dbReference type="Pfam" id="PF18567">
    <property type="entry name" value="TIR_3"/>
    <property type="match status" value="1"/>
</dbReference>
<dbReference type="SMART" id="SM01282">
    <property type="entry name" value="DBB"/>
    <property type="match status" value="1"/>
</dbReference>
<dbReference type="SUPFAM" id="SSF48403">
    <property type="entry name" value="Ankyrin repeat"/>
    <property type="match status" value="1"/>
</dbReference>
<dbReference type="PROSITE" id="PS51376">
    <property type="entry name" value="DBB"/>
    <property type="match status" value="1"/>
</dbReference>
<dbReference type="PROSITE" id="PS50104">
    <property type="entry name" value="TIR"/>
    <property type="match status" value="1"/>
</dbReference>
<sequence>MLPAAPGKGLGSPDPAPCGPAPPGNTKDIIMIYEEDAEEWALYLTEVFLHVVKREAILLYRLENFSFRHLELLNLTSYKCKLLILSNSLLRDLTPKKCQFLEKILHSPKSVVTLLCGVKSSDQLYELLNISQSRWEISTEQEPEDYISVIQSIIFKDSEDYFEVNIPTDLRAKHSGEISERKEIEELSEASRNTIPLAVVLPTEIPCENPGEIFIILRDEVIGDTVEVEFTSSNKRIRTRPALWNKKVWCMKALEFPAGSVHVNVYCDGIVKATTKIKYYPTAKAKECLFRMADSGESLCQNSIEELDGVLTSIFKHEIPYYEFQSLQTEICSQNKYTHFKELPTLLHCAAKFGLKNLAIHLLQCSGATWASKMKNMEGSDPAHIAERHGHKELKKIFEDFSIQEIDINNEQENDYEEDIASFSTYIPSTQNPAFHHESRKTYGQSADGAEANEMEGEGKQNGSGMETKHSPLEVGSESSEDQYDDLYVFIPGADPENNSQEPLMSSRPPLPPPRPVANAFQLERPHFTLPGTMVEGQMERSQNWGHPGVRQETGDEPKGEKEKKEEEKEQEEEEDPYTFAEIDDSEYDMILANLSIKKKTGSRSFIINRPPAPTPRPTSIPPKEETTPYIAQVFQQKTARRQSDDDKFCGLPKKQDRARIESPAFSTLRGCLTDGQEELILLQEKVKNGKMSMDEALEKFKHWQMGKSGLEMIQQEKLRQLRDCIIGKRPEEENVYNKLTIVHHPGGKETAHNENKFYNVHFSNKLPARPQVEKEFGFCCKKDH</sequence>
<reference key="1">
    <citation type="journal article" date="2002" name="EMBO J.">
        <title>BANK regulates BCR-induced calcium mobilization by promoting tyrosine phosphorylation of IP3 receptor.</title>
        <authorList>
            <person name="Yokoyama K."/>
            <person name="Su I."/>
            <person name="Tezuka T."/>
            <person name="Yasuda T."/>
            <person name="Mikoshiba K."/>
            <person name="Tarakhovsky A."/>
            <person name="Yamamoto T."/>
        </authorList>
    </citation>
    <scope>NUCLEOTIDE SEQUENCE [MRNA] (ISOFORM 3)</scope>
    <scope>TISSUE SPECIFICITY</scope>
    <scope>PHOSPHORYLATION</scope>
    <scope>INTERACTION WITH LYN; ITPR1 AND ITPR2</scope>
    <scope>FUNCTION</scope>
    <scope>VARIANT ARG-650</scope>
    <source>
        <tissue>B-cell</tissue>
    </source>
</reference>
<reference key="2">
    <citation type="journal article" date="2008" name="Nat. Genet.">
        <title>Functional variants in the B-cell gene BANK1 are associated with systemic lupus erythematosus.</title>
        <authorList>
            <person name="Kozyrev S.V."/>
            <person name="Abelson A.-K."/>
            <person name="Wojcik J."/>
            <person name="Zaghlool A."/>
            <person name="Linga Reddy M.V.P."/>
            <person name="Sanchez E."/>
            <person name="Gunnarsson I."/>
            <person name="Svenungsson E."/>
            <person name="Sturfelt G."/>
            <person name="Joensen A."/>
            <person name="Truedsson L."/>
            <person name="Pons-Estel B.A."/>
            <person name="Witte T."/>
            <person name="D'Alfonso S."/>
            <person name="Barizzone N."/>
            <person name="Danieli M.G."/>
            <person name="Gutierrez C."/>
            <person name="Suarez A."/>
            <person name="Junker P."/>
            <person name="Laustrup H."/>
            <person name="Gonzalez-Escribano M.F."/>
            <person name="Martin J."/>
            <person name="Abderrahim H."/>
            <person name="Alarcon-Riquelme M.E."/>
        </authorList>
    </citation>
    <scope>NUCLEOTIDE SEQUENCE [MRNA] (ISOFORM 4)</scope>
    <scope>TISSUE SPECIFICITY</scope>
    <scope>POSSIBLE INVOLVEMENT IN SLE</scope>
    <scope>VARIANTS HIS-61; THR-383 AND ARG-650</scope>
</reference>
<reference key="3">
    <citation type="journal article" date="2008" name="Nat. Genet.">
        <authorList>
            <person name="Kozyrev S.V."/>
            <person name="Abelson A.-K."/>
            <person name="Wojcik J."/>
            <person name="Zaghlool A."/>
            <person name="Linga Reddy M.V.P."/>
            <person name="Sanchez E."/>
            <person name="Gunnarsson I."/>
            <person name="Svenungsson E."/>
            <person name="Sturfelt G."/>
            <person name="Joensen A."/>
            <person name="Truedsson L."/>
            <person name="Pons-Estel B.A."/>
            <person name="Witte T."/>
            <person name="D'Alfonso S."/>
            <person name="Barizzone N."/>
            <person name="Danieli M.G."/>
            <person name="Gutierrez C."/>
            <person name="Suarez A."/>
            <person name="Junker P."/>
            <person name="Laustrup H."/>
            <person name="Gonzalez-Escribano M.F."/>
            <person name="Martin J."/>
            <person name="Abderrahim H."/>
            <person name="Alarcon-Riquelme M.E."/>
        </authorList>
    </citation>
    <scope>ERRATUM OF PUBMED:18204447</scope>
</reference>
<reference key="4">
    <citation type="journal article" date="2004" name="Nat. Genet.">
        <title>Complete sequencing and characterization of 21,243 full-length human cDNAs.</title>
        <authorList>
            <person name="Ota T."/>
            <person name="Suzuki Y."/>
            <person name="Nishikawa T."/>
            <person name="Otsuki T."/>
            <person name="Sugiyama T."/>
            <person name="Irie R."/>
            <person name="Wakamatsu A."/>
            <person name="Hayashi K."/>
            <person name="Sato H."/>
            <person name="Nagai K."/>
            <person name="Kimura K."/>
            <person name="Makita H."/>
            <person name="Sekine M."/>
            <person name="Obayashi M."/>
            <person name="Nishi T."/>
            <person name="Shibahara T."/>
            <person name="Tanaka T."/>
            <person name="Ishii S."/>
            <person name="Yamamoto J."/>
            <person name="Saito K."/>
            <person name="Kawai Y."/>
            <person name="Isono Y."/>
            <person name="Nakamura Y."/>
            <person name="Nagahari K."/>
            <person name="Murakami K."/>
            <person name="Yasuda T."/>
            <person name="Iwayanagi T."/>
            <person name="Wagatsuma M."/>
            <person name="Shiratori A."/>
            <person name="Sudo H."/>
            <person name="Hosoiri T."/>
            <person name="Kaku Y."/>
            <person name="Kodaira H."/>
            <person name="Kondo H."/>
            <person name="Sugawara M."/>
            <person name="Takahashi M."/>
            <person name="Kanda K."/>
            <person name="Yokoi T."/>
            <person name="Furuya T."/>
            <person name="Kikkawa E."/>
            <person name="Omura Y."/>
            <person name="Abe K."/>
            <person name="Kamihara K."/>
            <person name="Katsuta N."/>
            <person name="Sato K."/>
            <person name="Tanikawa M."/>
            <person name="Yamazaki M."/>
            <person name="Ninomiya K."/>
            <person name="Ishibashi T."/>
            <person name="Yamashita H."/>
            <person name="Murakawa K."/>
            <person name="Fujimori K."/>
            <person name="Tanai H."/>
            <person name="Kimata M."/>
            <person name="Watanabe M."/>
            <person name="Hiraoka S."/>
            <person name="Chiba Y."/>
            <person name="Ishida S."/>
            <person name="Ono Y."/>
            <person name="Takiguchi S."/>
            <person name="Watanabe S."/>
            <person name="Yosida M."/>
            <person name="Hotuta T."/>
            <person name="Kusano J."/>
            <person name="Kanehori K."/>
            <person name="Takahashi-Fujii A."/>
            <person name="Hara H."/>
            <person name="Tanase T.-O."/>
            <person name="Nomura Y."/>
            <person name="Togiya S."/>
            <person name="Komai F."/>
            <person name="Hara R."/>
            <person name="Takeuchi K."/>
            <person name="Arita M."/>
            <person name="Imose N."/>
            <person name="Musashino K."/>
            <person name="Yuuki H."/>
            <person name="Oshima A."/>
            <person name="Sasaki N."/>
            <person name="Aotsuka S."/>
            <person name="Yoshikawa Y."/>
            <person name="Matsunawa H."/>
            <person name="Ichihara T."/>
            <person name="Shiohata N."/>
            <person name="Sano S."/>
            <person name="Moriya S."/>
            <person name="Momiyama H."/>
            <person name="Satoh N."/>
            <person name="Takami S."/>
            <person name="Terashima Y."/>
            <person name="Suzuki O."/>
            <person name="Nakagawa S."/>
            <person name="Senoh A."/>
            <person name="Mizoguchi H."/>
            <person name="Goto Y."/>
            <person name="Shimizu F."/>
            <person name="Wakebe H."/>
            <person name="Hishigaki H."/>
            <person name="Watanabe T."/>
            <person name="Sugiyama A."/>
            <person name="Takemoto M."/>
            <person name="Kawakami B."/>
            <person name="Yamazaki M."/>
            <person name="Watanabe K."/>
            <person name="Kumagai A."/>
            <person name="Itakura S."/>
            <person name="Fukuzumi Y."/>
            <person name="Fujimori Y."/>
            <person name="Komiyama M."/>
            <person name="Tashiro H."/>
            <person name="Tanigami A."/>
            <person name="Fujiwara T."/>
            <person name="Ono T."/>
            <person name="Yamada K."/>
            <person name="Fujii Y."/>
            <person name="Ozaki K."/>
            <person name="Hirao M."/>
            <person name="Ohmori Y."/>
            <person name="Kawabata A."/>
            <person name="Hikiji T."/>
            <person name="Kobatake N."/>
            <person name="Inagaki H."/>
            <person name="Ikema Y."/>
            <person name="Okamoto S."/>
            <person name="Okitani R."/>
            <person name="Kawakami T."/>
            <person name="Noguchi S."/>
            <person name="Itoh T."/>
            <person name="Shigeta K."/>
            <person name="Senba T."/>
            <person name="Matsumura K."/>
            <person name="Nakajima Y."/>
            <person name="Mizuno T."/>
            <person name="Morinaga M."/>
            <person name="Sasaki M."/>
            <person name="Togashi T."/>
            <person name="Oyama M."/>
            <person name="Hata H."/>
            <person name="Watanabe M."/>
            <person name="Komatsu T."/>
            <person name="Mizushima-Sugano J."/>
            <person name="Satoh T."/>
            <person name="Shirai Y."/>
            <person name="Takahashi Y."/>
            <person name="Nakagawa K."/>
            <person name="Okumura K."/>
            <person name="Nagase T."/>
            <person name="Nomura N."/>
            <person name="Kikuchi H."/>
            <person name="Masuho Y."/>
            <person name="Yamashita R."/>
            <person name="Nakai K."/>
            <person name="Yada T."/>
            <person name="Nakamura Y."/>
            <person name="Ohara O."/>
            <person name="Isogai T."/>
            <person name="Sugano S."/>
        </authorList>
    </citation>
    <scope>NUCLEOTIDE SEQUENCE [LARGE SCALE MRNA] (ISOFORMS 1; 2 AND 3)</scope>
    <scope>VARIANTS THR-383 AND ARG-650</scope>
    <source>
        <tissue>Brain</tissue>
        <tissue>Ileal mucosa</tissue>
        <tissue>Synovium</tissue>
    </source>
</reference>
<reference key="5">
    <citation type="journal article" date="2007" name="BMC Genomics">
        <title>The full-ORF clone resource of the German cDNA consortium.</title>
        <authorList>
            <person name="Bechtel S."/>
            <person name="Rosenfelder H."/>
            <person name="Duda A."/>
            <person name="Schmidt C.P."/>
            <person name="Ernst U."/>
            <person name="Wellenreuther R."/>
            <person name="Mehrle A."/>
            <person name="Schuster C."/>
            <person name="Bahr A."/>
            <person name="Bloecker H."/>
            <person name="Heubner D."/>
            <person name="Hoerlein A."/>
            <person name="Michel G."/>
            <person name="Wedler H."/>
            <person name="Koehrer K."/>
            <person name="Ottenwaelder B."/>
            <person name="Poustka A."/>
            <person name="Wiemann S."/>
            <person name="Schupp I."/>
        </authorList>
    </citation>
    <scope>NUCLEOTIDE SEQUENCE [LARGE SCALE MRNA] (ISOFORM 1)</scope>
    <scope>VARIANT ARG-650</scope>
    <source>
        <tissue>Lymph node</tissue>
    </source>
</reference>
<reference key="6">
    <citation type="journal article" date="2005" name="Nature">
        <title>Generation and annotation of the DNA sequences of human chromosomes 2 and 4.</title>
        <authorList>
            <person name="Hillier L.W."/>
            <person name="Graves T.A."/>
            <person name="Fulton R.S."/>
            <person name="Fulton L.A."/>
            <person name="Pepin K.H."/>
            <person name="Minx P."/>
            <person name="Wagner-McPherson C."/>
            <person name="Layman D."/>
            <person name="Wylie K."/>
            <person name="Sekhon M."/>
            <person name="Becker M.C."/>
            <person name="Fewell G.A."/>
            <person name="Delehaunty K.D."/>
            <person name="Miner T.L."/>
            <person name="Nash W.E."/>
            <person name="Kremitzki C."/>
            <person name="Oddy L."/>
            <person name="Du H."/>
            <person name="Sun H."/>
            <person name="Bradshaw-Cordum H."/>
            <person name="Ali J."/>
            <person name="Carter J."/>
            <person name="Cordes M."/>
            <person name="Harris A."/>
            <person name="Isak A."/>
            <person name="van Brunt A."/>
            <person name="Nguyen C."/>
            <person name="Du F."/>
            <person name="Courtney L."/>
            <person name="Kalicki J."/>
            <person name="Ozersky P."/>
            <person name="Abbott S."/>
            <person name="Armstrong J."/>
            <person name="Belter E.A."/>
            <person name="Caruso L."/>
            <person name="Cedroni M."/>
            <person name="Cotton M."/>
            <person name="Davidson T."/>
            <person name="Desai A."/>
            <person name="Elliott G."/>
            <person name="Erb T."/>
            <person name="Fronick C."/>
            <person name="Gaige T."/>
            <person name="Haakenson W."/>
            <person name="Haglund K."/>
            <person name="Holmes A."/>
            <person name="Harkins R."/>
            <person name="Kim K."/>
            <person name="Kruchowski S.S."/>
            <person name="Strong C.M."/>
            <person name="Grewal N."/>
            <person name="Goyea E."/>
            <person name="Hou S."/>
            <person name="Levy A."/>
            <person name="Martinka S."/>
            <person name="Mead K."/>
            <person name="McLellan M.D."/>
            <person name="Meyer R."/>
            <person name="Randall-Maher J."/>
            <person name="Tomlinson C."/>
            <person name="Dauphin-Kohlberg S."/>
            <person name="Kozlowicz-Reilly A."/>
            <person name="Shah N."/>
            <person name="Swearengen-Shahid S."/>
            <person name="Snider J."/>
            <person name="Strong J.T."/>
            <person name="Thompson J."/>
            <person name="Yoakum M."/>
            <person name="Leonard S."/>
            <person name="Pearman C."/>
            <person name="Trani L."/>
            <person name="Radionenko M."/>
            <person name="Waligorski J.E."/>
            <person name="Wang C."/>
            <person name="Rock S.M."/>
            <person name="Tin-Wollam A.-M."/>
            <person name="Maupin R."/>
            <person name="Latreille P."/>
            <person name="Wendl M.C."/>
            <person name="Yang S.-P."/>
            <person name="Pohl C."/>
            <person name="Wallis J.W."/>
            <person name="Spieth J."/>
            <person name="Bieri T.A."/>
            <person name="Berkowicz N."/>
            <person name="Nelson J.O."/>
            <person name="Osborne J."/>
            <person name="Ding L."/>
            <person name="Meyer R."/>
            <person name="Sabo A."/>
            <person name="Shotland Y."/>
            <person name="Sinha P."/>
            <person name="Wohldmann P.E."/>
            <person name="Cook L.L."/>
            <person name="Hickenbotham M.T."/>
            <person name="Eldred J."/>
            <person name="Williams D."/>
            <person name="Jones T.A."/>
            <person name="She X."/>
            <person name="Ciccarelli F.D."/>
            <person name="Izaurralde E."/>
            <person name="Taylor J."/>
            <person name="Schmutz J."/>
            <person name="Myers R.M."/>
            <person name="Cox D.R."/>
            <person name="Huang X."/>
            <person name="McPherson J.D."/>
            <person name="Mardis E.R."/>
            <person name="Clifton S.W."/>
            <person name="Warren W.C."/>
            <person name="Chinwalla A.T."/>
            <person name="Eddy S.R."/>
            <person name="Marra M.A."/>
            <person name="Ovcharenko I."/>
            <person name="Furey T.S."/>
            <person name="Miller W."/>
            <person name="Eichler E.E."/>
            <person name="Bork P."/>
            <person name="Suyama M."/>
            <person name="Torrents D."/>
            <person name="Waterston R.H."/>
            <person name="Wilson R.K."/>
        </authorList>
    </citation>
    <scope>NUCLEOTIDE SEQUENCE [LARGE SCALE GENOMIC DNA]</scope>
</reference>
<reference key="7">
    <citation type="journal article" date="2004" name="Genome Res.">
        <title>The status, quality, and expansion of the NIH full-length cDNA project: the Mammalian Gene Collection (MGC).</title>
        <authorList>
            <consortium name="The MGC Project Team"/>
        </authorList>
    </citation>
    <scope>NUCLEOTIDE SEQUENCE [LARGE SCALE MRNA] (ISOFORM 1)</scope>
    <scope>VARIANT ARG-650</scope>
    <source>
        <tissue>Blood</tissue>
    </source>
</reference>
<gene>
    <name type="primary">BANK1</name>
</gene>
<organism>
    <name type="scientific">Homo sapiens</name>
    <name type="common">Human</name>
    <dbReference type="NCBI Taxonomy" id="9606"/>
    <lineage>
        <taxon>Eukaryota</taxon>
        <taxon>Metazoa</taxon>
        <taxon>Chordata</taxon>
        <taxon>Craniata</taxon>
        <taxon>Vertebrata</taxon>
        <taxon>Euteleostomi</taxon>
        <taxon>Mammalia</taxon>
        <taxon>Eutheria</taxon>
        <taxon>Euarchontoglires</taxon>
        <taxon>Primates</taxon>
        <taxon>Haplorrhini</taxon>
        <taxon>Catarrhini</taxon>
        <taxon>Hominidae</taxon>
        <taxon>Homo</taxon>
    </lineage>
</organism>
<accession>Q8NDB2</accession>
<accession>A8K7W8</accession>
<accession>B0F3S2</accession>
<accession>Q8N5K8</accession>
<accession>Q8NB56</accession>
<accession>Q8WYN5</accession>
<accession>Q9NWP2</accession>
<protein>
    <recommendedName>
        <fullName>B-cell scaffold protein with ankyrin repeats</fullName>
    </recommendedName>
</protein>
<keyword id="KW-0025">Alternative splicing</keyword>
<keyword id="KW-0040">ANK repeat</keyword>
<keyword id="KW-0075">B-cell activation</keyword>
<keyword id="KW-0597">Phosphoprotein</keyword>
<keyword id="KW-1267">Proteomics identification</keyword>
<keyword id="KW-1185">Reference proteome</keyword>
<keyword id="KW-0677">Repeat</keyword>
<keyword id="KW-0772">Systemic lupus erythematosus</keyword>
<name>BANK1_HUMAN</name>